<proteinExistence type="inferred from homology"/>
<accession>P29763</accession>
<keyword id="KW-0687">Ribonucleoprotein</keyword>
<keyword id="KW-0689">Ribosomal protein</keyword>
<dbReference type="EMBL" id="X66411">
    <property type="protein sequence ID" value="CAA47042.1"/>
    <property type="molecule type" value="mRNA"/>
</dbReference>
<dbReference type="PIR" id="S24990">
    <property type="entry name" value="R6KM1C"/>
</dbReference>
<dbReference type="RefSeq" id="XP_001699629.1">
    <property type="nucleotide sequence ID" value="XM_001699577.2"/>
</dbReference>
<dbReference type="SMR" id="P29763"/>
<dbReference type="PaxDb" id="3055-EDO98531"/>
<dbReference type="ProMEX" id="P29763"/>
<dbReference type="EnsemblPlants" id="PNW70904">
    <property type="protein sequence ID" value="PNW70904"/>
    <property type="gene ID" value="CHLRE_17g738300v5"/>
</dbReference>
<dbReference type="GeneID" id="5725138"/>
<dbReference type="Gramene" id="PNW70904">
    <property type="protein sequence ID" value="PNW70904"/>
    <property type="gene ID" value="CHLRE_17g738300v5"/>
</dbReference>
<dbReference type="KEGG" id="cre:CHLRE_17g738300v5"/>
<dbReference type="eggNOG" id="KOG1762">
    <property type="taxonomic scope" value="Eukaryota"/>
</dbReference>
<dbReference type="HOGENOM" id="CLU_114656_1_2_1"/>
<dbReference type="OMA" id="YSAHDHE"/>
<dbReference type="OrthoDB" id="2194681at2759"/>
<dbReference type="GO" id="GO:1990904">
    <property type="term" value="C:ribonucleoprotein complex"/>
    <property type="evidence" value="ECO:0007669"/>
    <property type="project" value="UniProtKB-KW"/>
</dbReference>
<dbReference type="GO" id="GO:0005840">
    <property type="term" value="C:ribosome"/>
    <property type="evidence" value="ECO:0007669"/>
    <property type="project" value="UniProtKB-KW"/>
</dbReference>
<dbReference type="GO" id="GO:0003735">
    <property type="term" value="F:structural constituent of ribosome"/>
    <property type="evidence" value="ECO:0007669"/>
    <property type="project" value="InterPro"/>
</dbReference>
<dbReference type="GO" id="GO:0006414">
    <property type="term" value="P:translational elongation"/>
    <property type="evidence" value="ECO:0007669"/>
    <property type="project" value="InterPro"/>
</dbReference>
<dbReference type="CDD" id="cd05831">
    <property type="entry name" value="Ribosomal_P1"/>
    <property type="match status" value="1"/>
</dbReference>
<dbReference type="FunFam" id="1.10.10.1410:FF:000001">
    <property type="entry name" value="60S acidic ribosomal protein P1"/>
    <property type="match status" value="1"/>
</dbReference>
<dbReference type="Gene3D" id="1.10.10.1410">
    <property type="match status" value="1"/>
</dbReference>
<dbReference type="HAMAP" id="MF_01478">
    <property type="entry name" value="Ribosomal_L12_arch"/>
    <property type="match status" value="1"/>
</dbReference>
<dbReference type="InterPro" id="IPR038716">
    <property type="entry name" value="P1/P2_N_sf"/>
</dbReference>
<dbReference type="InterPro" id="IPR027534">
    <property type="entry name" value="Ribosomal_P1/P2"/>
</dbReference>
<dbReference type="PANTHER" id="PTHR45696">
    <property type="entry name" value="60S ACIDIC RIBOSOMAL PROTEIN P1"/>
    <property type="match status" value="1"/>
</dbReference>
<dbReference type="PANTHER" id="PTHR45696:SF10">
    <property type="entry name" value="LARGE RIBOSOMAL SUBUNIT PROTEIN P1"/>
    <property type="match status" value="1"/>
</dbReference>
<dbReference type="Pfam" id="PF00428">
    <property type="entry name" value="Ribosomal_60s"/>
    <property type="match status" value="1"/>
</dbReference>
<comment type="function">
    <text evidence="1">Plays an important role in the elongation step of protein synthesis.</text>
</comment>
<comment type="subunit">
    <text evidence="1">P1 and P2 exist as dimers at the large ribosomal subunit.</text>
</comment>
<comment type="similarity">
    <text evidence="3">Belongs to the eukaryotic ribosomal protein P1/P2 family.</text>
</comment>
<sequence length="107" mass="10875">MSTSELACTYAALILHDDGLEITADNINTICKAAGVEVEGYWPALFAKLFAKKSMDDLITNVGAGGGAAPAAAAPAAGGAPAAGAAPKKEEKKEPSEEEDMGFSLFD</sequence>
<protein>
    <recommendedName>
        <fullName evidence="3">Large ribosomal subunit protein P1</fullName>
    </recommendedName>
    <alternativeName>
        <fullName>60S acidic ribosomal protein P1</fullName>
    </alternativeName>
</protein>
<feature type="chain" id="PRO_0000157698" description="Large ribosomal subunit protein P1">
    <location>
        <begin position="1"/>
        <end position="107"/>
    </location>
</feature>
<feature type="region of interest" description="Disordered" evidence="2">
    <location>
        <begin position="67"/>
        <end position="107"/>
    </location>
</feature>
<feature type="compositionally biased region" description="Low complexity" evidence="2">
    <location>
        <begin position="69"/>
        <end position="86"/>
    </location>
</feature>
<evidence type="ECO:0000250" key="1"/>
<evidence type="ECO:0000256" key="2">
    <source>
        <dbReference type="SAM" id="MobiDB-lite"/>
    </source>
</evidence>
<evidence type="ECO:0000305" key="3"/>
<reference key="1">
    <citation type="submission" date="1992-05" db="EMBL/GenBank/DDBJ databases">
        <authorList>
            <person name="Dumont F."/>
        </authorList>
    </citation>
    <scope>NUCLEOTIDE SEQUENCE [MRNA]</scope>
    <source>
        <strain>137c / CC-125</strain>
    </source>
</reference>
<name>RLA1_CHLRE</name>
<organism>
    <name type="scientific">Chlamydomonas reinhardtii</name>
    <name type="common">Chlamydomonas smithii</name>
    <dbReference type="NCBI Taxonomy" id="3055"/>
    <lineage>
        <taxon>Eukaryota</taxon>
        <taxon>Viridiplantae</taxon>
        <taxon>Chlorophyta</taxon>
        <taxon>core chlorophytes</taxon>
        <taxon>Chlorophyceae</taxon>
        <taxon>CS clade</taxon>
        <taxon>Chlamydomonadales</taxon>
        <taxon>Chlamydomonadaceae</taxon>
        <taxon>Chlamydomonas</taxon>
    </lineage>
</organism>